<accession>Q9PAL9</accession>
<dbReference type="EC" id="6.3.3.3" evidence="1"/>
<dbReference type="EMBL" id="AE003849">
    <property type="protein sequence ID" value="AAF85275.1"/>
    <property type="molecule type" value="Genomic_DNA"/>
</dbReference>
<dbReference type="PIR" id="E82551">
    <property type="entry name" value="E82551"/>
</dbReference>
<dbReference type="RefSeq" id="WP_010894919.1">
    <property type="nucleotide sequence ID" value="NC_002488.3"/>
</dbReference>
<dbReference type="SMR" id="Q9PAL9"/>
<dbReference type="STRING" id="160492.XF_2477"/>
<dbReference type="KEGG" id="xfa:XF_2477"/>
<dbReference type="PATRIC" id="fig|160492.11.peg.2629"/>
<dbReference type="eggNOG" id="COG0132">
    <property type="taxonomic scope" value="Bacteria"/>
</dbReference>
<dbReference type="HOGENOM" id="CLU_072551_0_0_6"/>
<dbReference type="UniPathway" id="UPA00078">
    <property type="reaction ID" value="UER00161"/>
</dbReference>
<dbReference type="Proteomes" id="UP000000812">
    <property type="component" value="Chromosome"/>
</dbReference>
<dbReference type="GO" id="GO:0005829">
    <property type="term" value="C:cytosol"/>
    <property type="evidence" value="ECO:0007669"/>
    <property type="project" value="TreeGrafter"/>
</dbReference>
<dbReference type="GO" id="GO:0005524">
    <property type="term" value="F:ATP binding"/>
    <property type="evidence" value="ECO:0007669"/>
    <property type="project" value="UniProtKB-UniRule"/>
</dbReference>
<dbReference type="GO" id="GO:0004141">
    <property type="term" value="F:dethiobiotin synthase activity"/>
    <property type="evidence" value="ECO:0007669"/>
    <property type="project" value="UniProtKB-UniRule"/>
</dbReference>
<dbReference type="GO" id="GO:0000287">
    <property type="term" value="F:magnesium ion binding"/>
    <property type="evidence" value="ECO:0007669"/>
    <property type="project" value="UniProtKB-UniRule"/>
</dbReference>
<dbReference type="GO" id="GO:0009102">
    <property type="term" value="P:biotin biosynthetic process"/>
    <property type="evidence" value="ECO:0007669"/>
    <property type="project" value="UniProtKB-UniRule"/>
</dbReference>
<dbReference type="CDD" id="cd03109">
    <property type="entry name" value="DTBS"/>
    <property type="match status" value="1"/>
</dbReference>
<dbReference type="FunFam" id="3.40.50.300:FF:000292">
    <property type="entry name" value="ATP-dependent dethiobiotin synthetase BioD"/>
    <property type="match status" value="1"/>
</dbReference>
<dbReference type="Gene3D" id="3.40.50.300">
    <property type="entry name" value="P-loop containing nucleotide triphosphate hydrolases"/>
    <property type="match status" value="1"/>
</dbReference>
<dbReference type="HAMAP" id="MF_00336">
    <property type="entry name" value="BioD"/>
    <property type="match status" value="1"/>
</dbReference>
<dbReference type="InterPro" id="IPR004472">
    <property type="entry name" value="DTB_synth_BioD"/>
</dbReference>
<dbReference type="InterPro" id="IPR027417">
    <property type="entry name" value="P-loop_NTPase"/>
</dbReference>
<dbReference type="NCBIfam" id="TIGR00347">
    <property type="entry name" value="bioD"/>
    <property type="match status" value="1"/>
</dbReference>
<dbReference type="PANTHER" id="PTHR43210">
    <property type="entry name" value="DETHIOBIOTIN SYNTHETASE"/>
    <property type="match status" value="1"/>
</dbReference>
<dbReference type="PANTHER" id="PTHR43210:SF5">
    <property type="entry name" value="DETHIOBIOTIN SYNTHETASE"/>
    <property type="match status" value="1"/>
</dbReference>
<dbReference type="Pfam" id="PF13500">
    <property type="entry name" value="AAA_26"/>
    <property type="match status" value="1"/>
</dbReference>
<dbReference type="PIRSF" id="PIRSF006755">
    <property type="entry name" value="DTB_synth"/>
    <property type="match status" value="1"/>
</dbReference>
<dbReference type="SUPFAM" id="SSF52540">
    <property type="entry name" value="P-loop containing nucleoside triphosphate hydrolases"/>
    <property type="match status" value="1"/>
</dbReference>
<name>BIOD_XYLFA</name>
<sequence length="226" mass="23911">MSLSAFYVTGTDTGIGKTFVSCILLHMLRGRGQRAVGMKPVASGCTYSDTGWRNEDALALQAASDPTPAYDLINPYALPAAVAPEIAAIEAGVTVALEPLSAAFTQLRAQADVVVVEGVGGWATPLNATIDQATLVRALEIPVVLVVGLRLGCLNHARLSTTAIMADGLRCIGWIANTIDPHMARIEENLALLRQRLPIPYWGHLPHIPPGINPATLAARLHPQGD</sequence>
<gene>
    <name evidence="1" type="primary">bioD</name>
    <name type="ordered locus">XF_2477</name>
</gene>
<protein>
    <recommendedName>
        <fullName evidence="1">ATP-dependent dethiobiotin synthetase BioD</fullName>
        <ecNumber evidence="1">6.3.3.3</ecNumber>
    </recommendedName>
    <alternativeName>
        <fullName evidence="1">DTB synthetase</fullName>
        <shortName evidence="1">DTBS</shortName>
    </alternativeName>
    <alternativeName>
        <fullName evidence="1">Dethiobiotin synthase</fullName>
    </alternativeName>
</protein>
<evidence type="ECO:0000255" key="1">
    <source>
        <dbReference type="HAMAP-Rule" id="MF_00336"/>
    </source>
</evidence>
<keyword id="KW-0067">ATP-binding</keyword>
<keyword id="KW-0093">Biotin biosynthesis</keyword>
<keyword id="KW-0963">Cytoplasm</keyword>
<keyword id="KW-0436">Ligase</keyword>
<keyword id="KW-0460">Magnesium</keyword>
<keyword id="KW-0479">Metal-binding</keyword>
<keyword id="KW-0547">Nucleotide-binding</keyword>
<feature type="chain" id="PRO_0000188000" description="ATP-dependent dethiobiotin synthetase BioD">
    <location>
        <begin position="1"/>
        <end position="226"/>
    </location>
</feature>
<feature type="active site" evidence="1">
    <location>
        <position position="39"/>
    </location>
</feature>
<feature type="binding site" evidence="1">
    <location>
        <begin position="14"/>
        <end position="19"/>
    </location>
    <ligand>
        <name>ATP</name>
        <dbReference type="ChEBI" id="CHEBI:30616"/>
    </ligand>
</feature>
<feature type="binding site" evidence="1">
    <location>
        <position position="18"/>
    </location>
    <ligand>
        <name>Mg(2+)</name>
        <dbReference type="ChEBI" id="CHEBI:18420"/>
    </ligand>
</feature>
<feature type="binding site" evidence="1">
    <location>
        <position position="43"/>
    </location>
    <ligand>
        <name>substrate</name>
    </ligand>
</feature>
<feature type="binding site" evidence="1">
    <location>
        <position position="56"/>
    </location>
    <ligand>
        <name>ATP</name>
        <dbReference type="ChEBI" id="CHEBI:30616"/>
    </ligand>
</feature>
<feature type="binding site" evidence="1">
    <location>
        <position position="56"/>
    </location>
    <ligand>
        <name>Mg(2+)</name>
        <dbReference type="ChEBI" id="CHEBI:18420"/>
    </ligand>
</feature>
<feature type="binding site" evidence="1">
    <location>
        <begin position="117"/>
        <end position="120"/>
    </location>
    <ligand>
        <name>ATP</name>
        <dbReference type="ChEBI" id="CHEBI:30616"/>
    </ligand>
</feature>
<feature type="binding site" evidence="1">
    <location>
        <position position="117"/>
    </location>
    <ligand>
        <name>Mg(2+)</name>
        <dbReference type="ChEBI" id="CHEBI:18420"/>
    </ligand>
</feature>
<feature type="binding site" evidence="1">
    <location>
        <begin position="177"/>
        <end position="178"/>
    </location>
    <ligand>
        <name>ATP</name>
        <dbReference type="ChEBI" id="CHEBI:30616"/>
    </ligand>
</feature>
<feature type="binding site" evidence="1">
    <location>
        <begin position="206"/>
        <end position="208"/>
    </location>
    <ligand>
        <name>ATP</name>
        <dbReference type="ChEBI" id="CHEBI:30616"/>
    </ligand>
</feature>
<feature type="binding site" evidence="1">
    <location>
        <position position="213"/>
    </location>
    <ligand>
        <name>ATP</name>
        <dbReference type="ChEBI" id="CHEBI:30616"/>
    </ligand>
</feature>
<comment type="function">
    <text evidence="1">Catalyzes a mechanistically unusual reaction, the ATP-dependent insertion of CO2 between the N7 and N8 nitrogen atoms of 7,8-diaminopelargonic acid (DAPA, also called 7,8-diammoniononanoate) to form a ureido ring.</text>
</comment>
<comment type="catalytic activity">
    <reaction evidence="1">
        <text>(7R,8S)-7,8-diammoniononanoate + CO2 + ATP = (4R,5S)-dethiobiotin + ADP + phosphate + 3 H(+)</text>
        <dbReference type="Rhea" id="RHEA:15805"/>
        <dbReference type="ChEBI" id="CHEBI:15378"/>
        <dbReference type="ChEBI" id="CHEBI:16526"/>
        <dbReference type="ChEBI" id="CHEBI:30616"/>
        <dbReference type="ChEBI" id="CHEBI:43474"/>
        <dbReference type="ChEBI" id="CHEBI:149469"/>
        <dbReference type="ChEBI" id="CHEBI:149473"/>
        <dbReference type="ChEBI" id="CHEBI:456216"/>
        <dbReference type="EC" id="6.3.3.3"/>
    </reaction>
</comment>
<comment type="cofactor">
    <cofactor evidence="1">
        <name>Mg(2+)</name>
        <dbReference type="ChEBI" id="CHEBI:18420"/>
    </cofactor>
</comment>
<comment type="pathway">
    <text evidence="1">Cofactor biosynthesis; biotin biosynthesis; biotin from 7,8-diaminononanoate: step 1/2.</text>
</comment>
<comment type="subunit">
    <text evidence="1">Homodimer.</text>
</comment>
<comment type="subcellular location">
    <subcellularLocation>
        <location evidence="1">Cytoplasm</location>
    </subcellularLocation>
</comment>
<comment type="similarity">
    <text evidence="1">Belongs to the dethiobiotin synthetase family.</text>
</comment>
<proteinExistence type="inferred from homology"/>
<reference key="1">
    <citation type="journal article" date="2000" name="Nature">
        <title>The genome sequence of the plant pathogen Xylella fastidiosa.</title>
        <authorList>
            <person name="Simpson A.J.G."/>
            <person name="Reinach F.C."/>
            <person name="Arruda P."/>
            <person name="Abreu F.A."/>
            <person name="Acencio M."/>
            <person name="Alvarenga R."/>
            <person name="Alves L.M.C."/>
            <person name="Araya J.E."/>
            <person name="Baia G.S."/>
            <person name="Baptista C.S."/>
            <person name="Barros M.H."/>
            <person name="Bonaccorsi E.D."/>
            <person name="Bordin S."/>
            <person name="Bove J.M."/>
            <person name="Briones M.R.S."/>
            <person name="Bueno M.R.P."/>
            <person name="Camargo A.A."/>
            <person name="Camargo L.E.A."/>
            <person name="Carraro D.M."/>
            <person name="Carrer H."/>
            <person name="Colauto N.B."/>
            <person name="Colombo C."/>
            <person name="Costa F.F."/>
            <person name="Costa M.C.R."/>
            <person name="Costa-Neto C.M."/>
            <person name="Coutinho L.L."/>
            <person name="Cristofani M."/>
            <person name="Dias-Neto E."/>
            <person name="Docena C."/>
            <person name="El-Dorry H."/>
            <person name="Facincani A.P."/>
            <person name="Ferreira A.J.S."/>
            <person name="Ferreira V.C.A."/>
            <person name="Ferro J.A."/>
            <person name="Fraga J.S."/>
            <person name="Franca S.C."/>
            <person name="Franco M.C."/>
            <person name="Frohme M."/>
            <person name="Furlan L.R."/>
            <person name="Garnier M."/>
            <person name="Goldman G.H."/>
            <person name="Goldman M.H.S."/>
            <person name="Gomes S.L."/>
            <person name="Gruber A."/>
            <person name="Ho P.L."/>
            <person name="Hoheisel J.D."/>
            <person name="Junqueira M.L."/>
            <person name="Kemper E.L."/>
            <person name="Kitajima J.P."/>
            <person name="Krieger J.E."/>
            <person name="Kuramae E.E."/>
            <person name="Laigret F."/>
            <person name="Lambais M.R."/>
            <person name="Leite L.C.C."/>
            <person name="Lemos E.G.M."/>
            <person name="Lemos M.V.F."/>
            <person name="Lopes S.A."/>
            <person name="Lopes C.R."/>
            <person name="Machado J.A."/>
            <person name="Machado M.A."/>
            <person name="Madeira A.M.B.N."/>
            <person name="Madeira H.M.F."/>
            <person name="Marino C.L."/>
            <person name="Marques M.V."/>
            <person name="Martins E.A.L."/>
            <person name="Martins E.M.F."/>
            <person name="Matsukuma A.Y."/>
            <person name="Menck C.F.M."/>
            <person name="Miracca E.C."/>
            <person name="Miyaki C.Y."/>
            <person name="Monteiro-Vitorello C.B."/>
            <person name="Moon D.H."/>
            <person name="Nagai M.A."/>
            <person name="Nascimento A.L.T.O."/>
            <person name="Netto L.E.S."/>
            <person name="Nhani A. Jr."/>
            <person name="Nobrega F.G."/>
            <person name="Nunes L.R."/>
            <person name="Oliveira M.A."/>
            <person name="de Oliveira M.C."/>
            <person name="de Oliveira R.C."/>
            <person name="Palmieri D.A."/>
            <person name="Paris A."/>
            <person name="Peixoto B.R."/>
            <person name="Pereira G.A.G."/>
            <person name="Pereira H.A. Jr."/>
            <person name="Pesquero J.B."/>
            <person name="Quaggio R.B."/>
            <person name="Roberto P.G."/>
            <person name="Rodrigues V."/>
            <person name="de Rosa A.J.M."/>
            <person name="de Rosa V.E. Jr."/>
            <person name="de Sa R.G."/>
            <person name="Santelli R.V."/>
            <person name="Sawasaki H.E."/>
            <person name="da Silva A.C.R."/>
            <person name="da Silva A.M."/>
            <person name="da Silva F.R."/>
            <person name="Silva W.A. Jr."/>
            <person name="da Silveira J.F."/>
            <person name="Silvestri M.L.Z."/>
            <person name="Siqueira W.J."/>
            <person name="de Souza A.A."/>
            <person name="de Souza A.P."/>
            <person name="Terenzi M.F."/>
            <person name="Truffi D."/>
            <person name="Tsai S.M."/>
            <person name="Tsuhako M.H."/>
            <person name="Vallada H."/>
            <person name="Van Sluys M.A."/>
            <person name="Verjovski-Almeida S."/>
            <person name="Vettore A.L."/>
            <person name="Zago M.A."/>
            <person name="Zatz M."/>
            <person name="Meidanis J."/>
            <person name="Setubal J.C."/>
        </authorList>
    </citation>
    <scope>NUCLEOTIDE SEQUENCE [LARGE SCALE GENOMIC DNA]</scope>
    <source>
        <strain>9a5c</strain>
    </source>
</reference>
<organism>
    <name type="scientific">Xylella fastidiosa (strain 9a5c)</name>
    <dbReference type="NCBI Taxonomy" id="160492"/>
    <lineage>
        <taxon>Bacteria</taxon>
        <taxon>Pseudomonadati</taxon>
        <taxon>Pseudomonadota</taxon>
        <taxon>Gammaproteobacteria</taxon>
        <taxon>Lysobacterales</taxon>
        <taxon>Lysobacteraceae</taxon>
        <taxon>Xylella</taxon>
    </lineage>
</organism>